<accession>B7MSX5</accession>
<gene>
    <name evidence="1" type="primary">psd</name>
    <name type="ordered locus">ECED1_4947</name>
</gene>
<sequence length="322" mass="35934">MLNSFKLSLQYILPKLWLTRLAGWGASKRAGWLTKLVIDLFVKYYKVDMKEAQKPDTASYRTFNEFFVRPLRDEVRPIDTDPNVLVMPADGVISQLGKIEEDKILQAKGHNYSLEALLAGNYLMADLFRNGTFVTTYLSPRDYHRVHMPCNGILREMIYVPGDLFSVNHLTAQNVPNLFARNERVICLFDTEFGPMAQILVGATIVGSIETVWAGTITPPREGIIKRWTWPAGENDGSVALLKGQEMGRFKLGSTVINLFAPGKVNLVEQLESLSVTKIGQPLAVSTETFVTPDAEPAPLPAEEIEAEHDASPLVDDKKDQV</sequence>
<proteinExistence type="inferred from homology"/>
<evidence type="ECO:0000255" key="1">
    <source>
        <dbReference type="HAMAP-Rule" id="MF_00662"/>
    </source>
</evidence>
<evidence type="ECO:0000256" key="2">
    <source>
        <dbReference type="SAM" id="MobiDB-lite"/>
    </source>
</evidence>
<name>PSD_ECO81</name>
<dbReference type="EC" id="4.1.1.65" evidence="1"/>
<dbReference type="EMBL" id="CU928162">
    <property type="protein sequence ID" value="CAR11050.2"/>
    <property type="molecule type" value="Genomic_DNA"/>
</dbReference>
<dbReference type="SMR" id="B7MSX5"/>
<dbReference type="KEGG" id="ecq:ECED1_4947"/>
<dbReference type="HOGENOM" id="CLU_029061_4_1_6"/>
<dbReference type="UniPathway" id="UPA00558">
    <property type="reaction ID" value="UER00616"/>
</dbReference>
<dbReference type="Proteomes" id="UP000000748">
    <property type="component" value="Chromosome"/>
</dbReference>
<dbReference type="GO" id="GO:0005886">
    <property type="term" value="C:plasma membrane"/>
    <property type="evidence" value="ECO:0007669"/>
    <property type="project" value="UniProtKB-SubCell"/>
</dbReference>
<dbReference type="GO" id="GO:0004609">
    <property type="term" value="F:phosphatidylserine decarboxylase activity"/>
    <property type="evidence" value="ECO:0007669"/>
    <property type="project" value="UniProtKB-UniRule"/>
</dbReference>
<dbReference type="GO" id="GO:0006646">
    <property type="term" value="P:phosphatidylethanolamine biosynthetic process"/>
    <property type="evidence" value="ECO:0007669"/>
    <property type="project" value="UniProtKB-UniRule"/>
</dbReference>
<dbReference type="HAMAP" id="MF_00662">
    <property type="entry name" value="PS_decarb_PSD_B_type1"/>
    <property type="match status" value="1"/>
</dbReference>
<dbReference type="InterPro" id="IPR003817">
    <property type="entry name" value="PS_Dcarbxylase"/>
</dbReference>
<dbReference type="InterPro" id="IPR033177">
    <property type="entry name" value="PSD-B"/>
</dbReference>
<dbReference type="InterPro" id="IPR033178">
    <property type="entry name" value="PSD_type1_pro"/>
</dbReference>
<dbReference type="NCBIfam" id="TIGR00163">
    <property type="entry name" value="PS_decarb"/>
    <property type="match status" value="1"/>
</dbReference>
<dbReference type="PANTHER" id="PTHR10067">
    <property type="entry name" value="PHOSPHATIDYLSERINE DECARBOXYLASE"/>
    <property type="match status" value="1"/>
</dbReference>
<dbReference type="PANTHER" id="PTHR10067:SF6">
    <property type="entry name" value="PHOSPHATIDYLSERINE DECARBOXYLASE PROENZYME, MITOCHONDRIAL"/>
    <property type="match status" value="1"/>
</dbReference>
<dbReference type="Pfam" id="PF02666">
    <property type="entry name" value="PS_Dcarbxylase"/>
    <property type="match status" value="1"/>
</dbReference>
<comment type="function">
    <text evidence="1">Catalyzes the formation of phosphatidylethanolamine (PtdEtn) from phosphatidylserine (PtdSer).</text>
</comment>
<comment type="catalytic activity">
    <reaction evidence="1">
        <text>a 1,2-diacyl-sn-glycero-3-phospho-L-serine + H(+) = a 1,2-diacyl-sn-glycero-3-phosphoethanolamine + CO2</text>
        <dbReference type="Rhea" id="RHEA:20828"/>
        <dbReference type="ChEBI" id="CHEBI:15378"/>
        <dbReference type="ChEBI" id="CHEBI:16526"/>
        <dbReference type="ChEBI" id="CHEBI:57262"/>
        <dbReference type="ChEBI" id="CHEBI:64612"/>
        <dbReference type="EC" id="4.1.1.65"/>
    </reaction>
</comment>
<comment type="cofactor">
    <cofactor evidence="1">
        <name>pyruvate</name>
        <dbReference type="ChEBI" id="CHEBI:15361"/>
    </cofactor>
    <text evidence="1">Binds 1 pyruvoyl group covalently per subunit.</text>
</comment>
<comment type="pathway">
    <text evidence="1">Phospholipid metabolism; phosphatidylethanolamine biosynthesis; phosphatidylethanolamine from CDP-diacylglycerol: step 2/2.</text>
</comment>
<comment type="subunit">
    <text evidence="1">Heterodimer of a large membrane-associated beta subunit and a small pyruvoyl-containing alpha subunit.</text>
</comment>
<comment type="subcellular location">
    <subcellularLocation>
        <location evidence="1">Cell membrane</location>
        <topology evidence="1">Peripheral membrane protein</topology>
    </subcellularLocation>
</comment>
<comment type="PTM">
    <text evidence="1">Is synthesized initially as an inactive proenzyme. Formation of the active enzyme involves a self-maturation process in which the active site pyruvoyl group is generated from an internal serine residue via an autocatalytic post-translational modification. Two non-identical subunits are generated from the proenzyme in this reaction, and the pyruvate is formed at the N-terminus of the alpha chain, which is derived from the carboxyl end of the proenzyme. The autoendoproteolytic cleavage occurs by a canonical serine protease mechanism, in which the side chain hydroxyl group of the serine supplies its oxygen atom to form the C-terminus of the beta chain, while the remainder of the serine residue undergoes an oxidative deamination to produce ammonia and the pyruvoyl prosthetic group on the alpha chain. During this reaction, the Ser that is part of the protease active site of the proenzyme becomes the pyruvoyl prosthetic group, which constitutes an essential element of the active site of the mature decarboxylase.</text>
</comment>
<comment type="similarity">
    <text evidence="1">Belongs to the phosphatidylserine decarboxylase family. PSD-B subfamily. Prokaryotic type I sub-subfamily.</text>
</comment>
<reference key="1">
    <citation type="journal article" date="2009" name="PLoS Genet.">
        <title>Organised genome dynamics in the Escherichia coli species results in highly diverse adaptive paths.</title>
        <authorList>
            <person name="Touchon M."/>
            <person name="Hoede C."/>
            <person name="Tenaillon O."/>
            <person name="Barbe V."/>
            <person name="Baeriswyl S."/>
            <person name="Bidet P."/>
            <person name="Bingen E."/>
            <person name="Bonacorsi S."/>
            <person name="Bouchier C."/>
            <person name="Bouvet O."/>
            <person name="Calteau A."/>
            <person name="Chiapello H."/>
            <person name="Clermont O."/>
            <person name="Cruveiller S."/>
            <person name="Danchin A."/>
            <person name="Diard M."/>
            <person name="Dossat C."/>
            <person name="Karoui M.E."/>
            <person name="Frapy E."/>
            <person name="Garry L."/>
            <person name="Ghigo J.M."/>
            <person name="Gilles A.M."/>
            <person name="Johnson J."/>
            <person name="Le Bouguenec C."/>
            <person name="Lescat M."/>
            <person name="Mangenot S."/>
            <person name="Martinez-Jehanne V."/>
            <person name="Matic I."/>
            <person name="Nassif X."/>
            <person name="Oztas S."/>
            <person name="Petit M.A."/>
            <person name="Pichon C."/>
            <person name="Rouy Z."/>
            <person name="Ruf C.S."/>
            <person name="Schneider D."/>
            <person name="Tourret J."/>
            <person name="Vacherie B."/>
            <person name="Vallenet D."/>
            <person name="Medigue C."/>
            <person name="Rocha E.P.C."/>
            <person name="Denamur E."/>
        </authorList>
    </citation>
    <scope>NUCLEOTIDE SEQUENCE [LARGE SCALE GENOMIC DNA]</scope>
    <source>
        <strain>ED1a</strain>
    </source>
</reference>
<keyword id="KW-1003">Cell membrane</keyword>
<keyword id="KW-0210">Decarboxylase</keyword>
<keyword id="KW-0444">Lipid biosynthesis</keyword>
<keyword id="KW-0443">Lipid metabolism</keyword>
<keyword id="KW-0456">Lyase</keyword>
<keyword id="KW-0472">Membrane</keyword>
<keyword id="KW-0594">Phospholipid biosynthesis</keyword>
<keyword id="KW-1208">Phospholipid metabolism</keyword>
<keyword id="KW-0670">Pyruvate</keyword>
<keyword id="KW-0865">Zymogen</keyword>
<feature type="chain" id="PRO_1000147603" description="Phosphatidylserine decarboxylase beta chain" evidence="1">
    <location>
        <begin position="1"/>
        <end position="253"/>
    </location>
</feature>
<feature type="chain" id="PRO_1000147604" description="Phosphatidylserine decarboxylase alpha chain" evidence="1">
    <location>
        <begin position="254"/>
        <end position="322"/>
    </location>
</feature>
<feature type="region of interest" description="Disordered" evidence="2">
    <location>
        <begin position="293"/>
        <end position="322"/>
    </location>
</feature>
<feature type="compositionally biased region" description="Basic and acidic residues" evidence="2">
    <location>
        <begin position="308"/>
        <end position="322"/>
    </location>
</feature>
<feature type="active site" description="Charge relay system; for autoendoproteolytic cleavage activity" evidence="1">
    <location>
        <position position="90"/>
    </location>
</feature>
<feature type="active site" description="Charge relay system; for autoendoproteolytic cleavage activity" evidence="1">
    <location>
        <position position="147"/>
    </location>
</feature>
<feature type="active site" description="Charge relay system; for autoendoproteolytic cleavage activity" evidence="1">
    <location>
        <position position="254"/>
    </location>
</feature>
<feature type="active site" description="Schiff-base intermediate with substrate; via pyruvic acid; for decarboxylase activity" evidence="1">
    <location>
        <position position="254"/>
    </location>
</feature>
<feature type="site" description="Cleavage (non-hydrolytic); by autocatalysis" evidence="1">
    <location>
        <begin position="253"/>
        <end position="254"/>
    </location>
</feature>
<feature type="modified residue" description="Pyruvic acid (Ser); by autocatalysis" evidence="1">
    <location>
        <position position="254"/>
    </location>
</feature>
<organism>
    <name type="scientific">Escherichia coli O81 (strain ED1a)</name>
    <dbReference type="NCBI Taxonomy" id="585397"/>
    <lineage>
        <taxon>Bacteria</taxon>
        <taxon>Pseudomonadati</taxon>
        <taxon>Pseudomonadota</taxon>
        <taxon>Gammaproteobacteria</taxon>
        <taxon>Enterobacterales</taxon>
        <taxon>Enterobacteriaceae</taxon>
        <taxon>Escherichia</taxon>
    </lineage>
</organism>
<protein>
    <recommendedName>
        <fullName evidence="1">Phosphatidylserine decarboxylase proenzyme</fullName>
        <ecNumber evidence="1">4.1.1.65</ecNumber>
    </recommendedName>
    <component>
        <recommendedName>
            <fullName evidence="1">Phosphatidylserine decarboxylase alpha chain</fullName>
        </recommendedName>
    </component>
    <component>
        <recommendedName>
            <fullName evidence="1">Phosphatidylserine decarboxylase beta chain</fullName>
        </recommendedName>
    </component>
</protein>